<evidence type="ECO:0000255" key="1">
    <source>
        <dbReference type="HAMAP-Rule" id="MF_00041"/>
    </source>
</evidence>
<comment type="catalytic activity">
    <reaction evidence="1">
        <text>tRNA(Cys) + L-cysteine + ATP = L-cysteinyl-tRNA(Cys) + AMP + diphosphate</text>
        <dbReference type="Rhea" id="RHEA:17773"/>
        <dbReference type="Rhea" id="RHEA-COMP:9661"/>
        <dbReference type="Rhea" id="RHEA-COMP:9679"/>
        <dbReference type="ChEBI" id="CHEBI:30616"/>
        <dbReference type="ChEBI" id="CHEBI:33019"/>
        <dbReference type="ChEBI" id="CHEBI:35235"/>
        <dbReference type="ChEBI" id="CHEBI:78442"/>
        <dbReference type="ChEBI" id="CHEBI:78517"/>
        <dbReference type="ChEBI" id="CHEBI:456215"/>
        <dbReference type="EC" id="6.1.1.16"/>
    </reaction>
</comment>
<comment type="cofactor">
    <cofactor evidence="1">
        <name>Zn(2+)</name>
        <dbReference type="ChEBI" id="CHEBI:29105"/>
    </cofactor>
    <text evidence="1">Binds 1 zinc ion per subunit.</text>
</comment>
<comment type="subcellular location">
    <subcellularLocation>
        <location evidence="1">Cytoplasm</location>
    </subcellularLocation>
</comment>
<comment type="similarity">
    <text evidence="1">Belongs to the class-I aminoacyl-tRNA synthetase family.</text>
</comment>
<dbReference type="EC" id="6.1.1.16" evidence="1"/>
<dbReference type="EMBL" id="AY596297">
    <property type="protein sequence ID" value="AAV46229.1"/>
    <property type="molecule type" value="Genomic_DNA"/>
</dbReference>
<dbReference type="RefSeq" id="WP_011223537.1">
    <property type="nucleotide sequence ID" value="NC_006396.1"/>
</dbReference>
<dbReference type="SMR" id="Q5V2M3"/>
<dbReference type="STRING" id="272569.rrnAC1292"/>
<dbReference type="PaxDb" id="272569-rrnAC1292"/>
<dbReference type="EnsemblBacteria" id="AAV46229">
    <property type="protein sequence ID" value="AAV46229"/>
    <property type="gene ID" value="rrnAC1292"/>
</dbReference>
<dbReference type="GeneID" id="40152273"/>
<dbReference type="KEGG" id="hma:rrnAC1292"/>
<dbReference type="PATRIC" id="fig|272569.17.peg.1996"/>
<dbReference type="eggNOG" id="arCOG00486">
    <property type="taxonomic scope" value="Archaea"/>
</dbReference>
<dbReference type="HOGENOM" id="CLU_013528_0_1_2"/>
<dbReference type="Proteomes" id="UP000001169">
    <property type="component" value="Chromosome I"/>
</dbReference>
<dbReference type="GO" id="GO:0005737">
    <property type="term" value="C:cytoplasm"/>
    <property type="evidence" value="ECO:0007669"/>
    <property type="project" value="UniProtKB-SubCell"/>
</dbReference>
<dbReference type="GO" id="GO:0005524">
    <property type="term" value="F:ATP binding"/>
    <property type="evidence" value="ECO:0007669"/>
    <property type="project" value="UniProtKB-UniRule"/>
</dbReference>
<dbReference type="GO" id="GO:0004817">
    <property type="term" value="F:cysteine-tRNA ligase activity"/>
    <property type="evidence" value="ECO:0007669"/>
    <property type="project" value="UniProtKB-UniRule"/>
</dbReference>
<dbReference type="GO" id="GO:0008270">
    <property type="term" value="F:zinc ion binding"/>
    <property type="evidence" value="ECO:0007669"/>
    <property type="project" value="UniProtKB-UniRule"/>
</dbReference>
<dbReference type="GO" id="GO:0006423">
    <property type="term" value="P:cysteinyl-tRNA aminoacylation"/>
    <property type="evidence" value="ECO:0007669"/>
    <property type="project" value="UniProtKB-UniRule"/>
</dbReference>
<dbReference type="CDD" id="cd00672">
    <property type="entry name" value="CysRS_core"/>
    <property type="match status" value="1"/>
</dbReference>
<dbReference type="Gene3D" id="1.20.120.1910">
    <property type="entry name" value="Cysteine-tRNA ligase, C-terminal anti-codon recognition domain"/>
    <property type="match status" value="1"/>
</dbReference>
<dbReference type="Gene3D" id="3.40.50.620">
    <property type="entry name" value="HUPs"/>
    <property type="match status" value="1"/>
</dbReference>
<dbReference type="HAMAP" id="MF_00041">
    <property type="entry name" value="Cys_tRNA_synth"/>
    <property type="match status" value="1"/>
</dbReference>
<dbReference type="InterPro" id="IPR015803">
    <property type="entry name" value="Cys-tRNA-ligase"/>
</dbReference>
<dbReference type="InterPro" id="IPR015273">
    <property type="entry name" value="Cys-tRNA-synt_Ia_DALR"/>
</dbReference>
<dbReference type="InterPro" id="IPR024909">
    <property type="entry name" value="Cys-tRNA/MSH_ligase"/>
</dbReference>
<dbReference type="InterPro" id="IPR056411">
    <property type="entry name" value="CysS_C"/>
</dbReference>
<dbReference type="InterPro" id="IPR014729">
    <property type="entry name" value="Rossmann-like_a/b/a_fold"/>
</dbReference>
<dbReference type="InterPro" id="IPR032678">
    <property type="entry name" value="tRNA-synt_1_cat_dom"/>
</dbReference>
<dbReference type="InterPro" id="IPR009080">
    <property type="entry name" value="tRNAsynth_Ia_anticodon-bd"/>
</dbReference>
<dbReference type="NCBIfam" id="TIGR00435">
    <property type="entry name" value="cysS"/>
    <property type="match status" value="1"/>
</dbReference>
<dbReference type="PANTHER" id="PTHR10890:SF3">
    <property type="entry name" value="CYSTEINE--TRNA LIGASE, CYTOPLASMIC"/>
    <property type="match status" value="1"/>
</dbReference>
<dbReference type="PANTHER" id="PTHR10890">
    <property type="entry name" value="CYSTEINYL-TRNA SYNTHETASE"/>
    <property type="match status" value="1"/>
</dbReference>
<dbReference type="Pfam" id="PF23493">
    <property type="entry name" value="CysS_C"/>
    <property type="match status" value="1"/>
</dbReference>
<dbReference type="Pfam" id="PF09190">
    <property type="entry name" value="DALR_2"/>
    <property type="match status" value="1"/>
</dbReference>
<dbReference type="Pfam" id="PF01406">
    <property type="entry name" value="tRNA-synt_1e"/>
    <property type="match status" value="1"/>
</dbReference>
<dbReference type="PRINTS" id="PR00983">
    <property type="entry name" value="TRNASYNTHCYS"/>
</dbReference>
<dbReference type="SMART" id="SM00840">
    <property type="entry name" value="DALR_2"/>
    <property type="match status" value="1"/>
</dbReference>
<dbReference type="SUPFAM" id="SSF47323">
    <property type="entry name" value="Anticodon-binding domain of a subclass of class I aminoacyl-tRNA synthetases"/>
    <property type="match status" value="1"/>
</dbReference>
<dbReference type="SUPFAM" id="SSF52374">
    <property type="entry name" value="Nucleotidylyl transferase"/>
    <property type="match status" value="1"/>
</dbReference>
<sequence length="492" mass="54915">MTLRVTNTLTGEKEPFEPRDPDSVLLYYCGLTTSDPPHLGHARGWVHVDVMARWLDYLGYDVHHVENLTDVNEKIVARVGEDGDSEADVARHYVQQAIDDMRSLNLGRAEVYPRVSEHVPEIIDLVERLIEQGHAYEQNGSVYFDVTSFEDYGKLSNQSVDDIESQGADTEGEKRHPADFALWKAGGVDPADIAEHQHPEAAPAEEACQTAQIWDSPWGEGRPGWHIECSAMSMTHLDESIDIHVGGQDLVFPHHENEVAQSEAATGKQFANYWLHVRLLETEEEKMSSSLGNYFTVADAVEEFGPDVLRTFLLSTAYTSRATYSDETIAEAKERWDRLSRGYERAVEACDDVDAHTKVTDETLRDAVEDARSAFEAALNDDFNTREAMTALLDLTAAVNTHVDGHDEYDYQGLRRAVETFEEFGGGILGLAFGDDDSGDVSLAGDVVDLVLTVRQQEREAGNYERADELRDELEALGVEVQDTDDGPTYRL</sequence>
<name>SYC_HALMA</name>
<feature type="chain" id="PRO_0000159534" description="Cysteine--tRNA ligase">
    <location>
        <begin position="1"/>
        <end position="492"/>
    </location>
</feature>
<feature type="short sequence motif" description="'HIGH' region">
    <location>
        <begin position="31"/>
        <end position="41"/>
    </location>
</feature>
<feature type="short sequence motif" description="'KMSKS' region">
    <location>
        <begin position="286"/>
        <end position="290"/>
    </location>
</feature>
<feature type="binding site" evidence="1">
    <location>
        <position position="29"/>
    </location>
    <ligand>
        <name>Zn(2+)</name>
        <dbReference type="ChEBI" id="CHEBI:29105"/>
    </ligand>
</feature>
<feature type="binding site" evidence="1">
    <location>
        <position position="229"/>
    </location>
    <ligand>
        <name>Zn(2+)</name>
        <dbReference type="ChEBI" id="CHEBI:29105"/>
    </ligand>
</feature>
<feature type="binding site" evidence="1">
    <location>
        <position position="254"/>
    </location>
    <ligand>
        <name>Zn(2+)</name>
        <dbReference type="ChEBI" id="CHEBI:29105"/>
    </ligand>
</feature>
<feature type="binding site" evidence="1">
    <location>
        <position position="258"/>
    </location>
    <ligand>
        <name>Zn(2+)</name>
        <dbReference type="ChEBI" id="CHEBI:29105"/>
    </ligand>
</feature>
<accession>Q5V2M3</accession>
<proteinExistence type="inferred from homology"/>
<organism>
    <name type="scientific">Haloarcula marismortui (strain ATCC 43049 / DSM 3752 / JCM 8966 / VKM B-1809)</name>
    <name type="common">Halobacterium marismortui</name>
    <dbReference type="NCBI Taxonomy" id="272569"/>
    <lineage>
        <taxon>Archaea</taxon>
        <taxon>Methanobacteriati</taxon>
        <taxon>Methanobacteriota</taxon>
        <taxon>Stenosarchaea group</taxon>
        <taxon>Halobacteria</taxon>
        <taxon>Halobacteriales</taxon>
        <taxon>Haloarculaceae</taxon>
        <taxon>Haloarcula</taxon>
    </lineage>
</organism>
<reference key="1">
    <citation type="journal article" date="2004" name="Genome Res.">
        <title>Genome sequence of Haloarcula marismortui: a halophilic archaeon from the Dead Sea.</title>
        <authorList>
            <person name="Baliga N.S."/>
            <person name="Bonneau R."/>
            <person name="Facciotti M.T."/>
            <person name="Pan M."/>
            <person name="Glusman G."/>
            <person name="Deutsch E.W."/>
            <person name="Shannon P."/>
            <person name="Chiu Y."/>
            <person name="Weng R.S."/>
            <person name="Gan R.R."/>
            <person name="Hung P."/>
            <person name="Date S.V."/>
            <person name="Marcotte E."/>
            <person name="Hood L."/>
            <person name="Ng W.V."/>
        </authorList>
    </citation>
    <scope>NUCLEOTIDE SEQUENCE [LARGE SCALE GENOMIC DNA]</scope>
    <source>
        <strain>ATCC 43049 / DSM 3752 / JCM 8966 / VKM B-1809</strain>
    </source>
</reference>
<keyword id="KW-0030">Aminoacyl-tRNA synthetase</keyword>
<keyword id="KW-0067">ATP-binding</keyword>
<keyword id="KW-0963">Cytoplasm</keyword>
<keyword id="KW-0436">Ligase</keyword>
<keyword id="KW-0479">Metal-binding</keyword>
<keyword id="KW-0547">Nucleotide-binding</keyword>
<keyword id="KW-0648">Protein biosynthesis</keyword>
<keyword id="KW-1185">Reference proteome</keyword>
<keyword id="KW-0862">Zinc</keyword>
<gene>
    <name evidence="1" type="primary">cysS</name>
    <name type="ordered locus">rrnAC1292</name>
</gene>
<protein>
    <recommendedName>
        <fullName evidence="1">Cysteine--tRNA ligase</fullName>
        <ecNumber evidence="1">6.1.1.16</ecNumber>
    </recommendedName>
    <alternativeName>
        <fullName evidence="1">Cysteinyl-tRNA synthetase</fullName>
        <shortName evidence="1">CysRS</shortName>
    </alternativeName>
</protein>